<reference key="1">
    <citation type="submission" date="2007-10" db="EMBL/GenBank/DDBJ databases">
        <title>The NIAID influenza genome sequencing project.</title>
        <authorList>
            <person name="Ghedin E."/>
            <person name="Spiro D."/>
            <person name="Miller N."/>
            <person name="Zaborsky J."/>
            <person name="Feldblyum T."/>
            <person name="Subbu V."/>
            <person name="Shumway M."/>
            <person name="Sparenborg J."/>
            <person name="Groveman L."/>
            <person name="Halpin R."/>
            <person name="Sitz J."/>
            <person name="Koo H."/>
            <person name="Salzberg S.L."/>
            <person name="Webster R.G."/>
            <person name="Hoffmann E."/>
            <person name="Krauss S."/>
            <person name="Naeve C."/>
            <person name="Bao Y."/>
            <person name="Bolotov P."/>
            <person name="Dernovoy D."/>
            <person name="Kiryutin B."/>
            <person name="Lipman D.J."/>
            <person name="Tatusova T."/>
        </authorList>
    </citation>
    <scope>NUCLEOTIDE SEQUENCE [GENOMIC RNA]</scope>
</reference>
<reference key="2">
    <citation type="submission" date="2007-10" db="EMBL/GenBank/DDBJ databases">
        <authorList>
            <consortium name="The NIAID Influenza Genome Sequencing Consortium"/>
        </authorList>
    </citation>
    <scope>NUCLEOTIDE SEQUENCE [GENOMIC RNA]</scope>
</reference>
<comment type="miscellaneous">
    <text>A stop codon is present at position 12 leading to a truncated form of PB1-F2.</text>
</comment>
<comment type="similarity">
    <text evidence="1">Belongs to the influenza viruses PB1-F2 family.</text>
</comment>
<evidence type="ECO:0000305" key="1"/>
<protein>
    <recommendedName>
        <fullName>Putative protein PB1-F2</fullName>
    </recommendedName>
</protein>
<proteinExistence type="inferred from homology"/>
<organismHost>
    <name type="scientific">Aves</name>
    <dbReference type="NCBI Taxonomy" id="8782"/>
</organismHost>
<organismHost>
    <name type="scientific">Homo sapiens</name>
    <name type="common">Human</name>
    <dbReference type="NCBI Taxonomy" id="9606"/>
</organismHost>
<organismHost>
    <name type="scientific">Sus scrofa</name>
    <name type="common">Pig</name>
    <dbReference type="NCBI Taxonomy" id="9823"/>
</organismHost>
<organism>
    <name type="scientific">Influenza A virus (strain A/Swine/Wisconsin/1/1967 H1N1)</name>
    <dbReference type="NCBI Taxonomy" id="382855"/>
    <lineage>
        <taxon>Viruses</taxon>
        <taxon>Riboviria</taxon>
        <taxon>Orthornavirae</taxon>
        <taxon>Negarnaviricota</taxon>
        <taxon>Polyploviricotina</taxon>
        <taxon>Insthoviricetes</taxon>
        <taxon>Articulavirales</taxon>
        <taxon>Orthomyxoviridae</taxon>
        <taxon>Alphainfluenzavirus</taxon>
        <taxon>Alphainfluenzavirus influenzae</taxon>
        <taxon>Influenza A virus</taxon>
    </lineage>
</organism>
<name>PB1F2_I67A2</name>
<dbReference type="EMBL" id="CY026297">
    <property type="protein sequence ID" value="ABV82593.1"/>
    <property type="status" value="ALT_SEQ"/>
    <property type="molecule type" value="Viral_cRNA"/>
</dbReference>
<dbReference type="Proteomes" id="UP000116872">
    <property type="component" value="Genome"/>
</dbReference>
<dbReference type="GO" id="GO:0039545">
    <property type="term" value="P:symbiont-mediated suppression of host cytoplasmic pattern recognition receptor signaling pathway via inhibition of MAVS activity"/>
    <property type="evidence" value="ECO:0000250"/>
    <property type="project" value="UniProtKB"/>
</dbReference>
<sequence>MGQEQDTPWIL</sequence>
<feature type="chain" id="PRO_0000373021" description="Putative protein PB1-F2">
    <location>
        <begin position="1"/>
        <end position="11"/>
    </location>
</feature>
<accession>A8C8X2</accession>
<gene>
    <name type="primary">PB1-F2</name>
</gene>